<organism>
    <name type="scientific">Arabidopsis thaliana</name>
    <name type="common">Mouse-ear cress</name>
    <dbReference type="NCBI Taxonomy" id="3702"/>
    <lineage>
        <taxon>Eukaryota</taxon>
        <taxon>Viridiplantae</taxon>
        <taxon>Streptophyta</taxon>
        <taxon>Embryophyta</taxon>
        <taxon>Tracheophyta</taxon>
        <taxon>Spermatophyta</taxon>
        <taxon>Magnoliopsida</taxon>
        <taxon>eudicotyledons</taxon>
        <taxon>Gunneridae</taxon>
        <taxon>Pentapetalae</taxon>
        <taxon>rosids</taxon>
        <taxon>malvids</taxon>
        <taxon>Brassicales</taxon>
        <taxon>Brassicaceae</taxon>
        <taxon>Camelineae</taxon>
        <taxon>Arabidopsis</taxon>
    </lineage>
</organism>
<reference key="1">
    <citation type="journal article" date="2000" name="DNA Res.">
        <title>Structural analysis of Arabidopsis thaliana chromosome 3. II. Sequence features of the 4,251,695 bp regions covered by 90 P1, TAC and BAC clones.</title>
        <authorList>
            <person name="Kaneko T."/>
            <person name="Katoh T."/>
            <person name="Sato S."/>
            <person name="Nakamura Y."/>
            <person name="Asamizu E."/>
            <person name="Tabata S."/>
        </authorList>
    </citation>
    <scope>NUCLEOTIDE SEQUENCE [LARGE SCALE GENOMIC DNA]</scope>
    <source>
        <strain>cv. Columbia</strain>
    </source>
</reference>
<reference key="2">
    <citation type="journal article" date="2017" name="Plant J.">
        <title>Araport11: a complete reannotation of the Arabidopsis thaliana reference genome.</title>
        <authorList>
            <person name="Cheng C.Y."/>
            <person name="Krishnakumar V."/>
            <person name="Chan A.P."/>
            <person name="Thibaud-Nissen F."/>
            <person name="Schobel S."/>
            <person name="Town C.D."/>
        </authorList>
    </citation>
    <scope>GENOME REANNOTATION</scope>
    <source>
        <strain>cv. Columbia</strain>
    </source>
</reference>
<reference key="3">
    <citation type="journal article" date="2004" name="Plant Cell">
        <title>Genome-wide analysis of Arabidopsis pentatricopeptide repeat proteins reveals their essential role in organelle biogenesis.</title>
        <authorList>
            <person name="Lurin C."/>
            <person name="Andres C."/>
            <person name="Aubourg S."/>
            <person name="Bellaoui M."/>
            <person name="Bitton F."/>
            <person name="Bruyere C."/>
            <person name="Caboche M."/>
            <person name="Debast C."/>
            <person name="Gualberto J."/>
            <person name="Hoffmann B."/>
            <person name="Lecharny A."/>
            <person name="Le Ret M."/>
            <person name="Martin-Magniette M.-L."/>
            <person name="Mireau H."/>
            <person name="Peeters N."/>
            <person name="Renou J.-P."/>
            <person name="Szurek B."/>
            <person name="Taconnat L."/>
            <person name="Small I."/>
        </authorList>
    </citation>
    <scope>GENE FAMILY</scope>
</reference>
<keyword id="KW-0496">Mitochondrion</keyword>
<keyword id="KW-1185">Reference proteome</keyword>
<keyword id="KW-0677">Repeat</keyword>
<keyword id="KW-0809">Transit peptide</keyword>
<proteinExistence type="inferred from homology"/>
<feature type="transit peptide" description="Mitochondrion" evidence="1">
    <location>
        <begin position="1"/>
        <end position="19"/>
    </location>
</feature>
<feature type="chain" id="PRO_0000356086" description="Putative pentatricopeptide repeat-containing protein At3g13770, mitochondrial">
    <location>
        <begin position="20"/>
        <end position="628"/>
    </location>
</feature>
<feature type="repeat" description="PPR 1">
    <location>
        <begin position="51"/>
        <end position="85"/>
    </location>
</feature>
<feature type="repeat" description="PPR 2">
    <location>
        <begin position="86"/>
        <end position="116"/>
    </location>
</feature>
<feature type="repeat" description="PPR 3">
    <location>
        <begin position="117"/>
        <end position="151"/>
    </location>
</feature>
<feature type="repeat" description="PPR 4">
    <location>
        <begin position="152"/>
        <end position="186"/>
    </location>
</feature>
<feature type="repeat" description="PPR 5">
    <location>
        <begin position="187"/>
        <end position="217"/>
    </location>
</feature>
<feature type="repeat" description="PPR 6">
    <location>
        <begin position="218"/>
        <end position="252"/>
    </location>
</feature>
<feature type="repeat" description="PPR 7">
    <location>
        <begin position="253"/>
        <end position="287"/>
    </location>
</feature>
<feature type="repeat" description="PPR 8">
    <location>
        <begin position="288"/>
        <end position="318"/>
    </location>
</feature>
<feature type="repeat" description="PPR 9">
    <location>
        <begin position="319"/>
        <end position="353"/>
    </location>
</feature>
<feature type="repeat" description="PPR 10">
    <location>
        <begin position="355"/>
        <end position="389"/>
    </location>
</feature>
<feature type="repeat" description="PPR 11">
    <location>
        <begin position="392"/>
        <end position="422"/>
    </location>
</feature>
<feature type="region of interest" description="Type E motif">
    <location>
        <begin position="427"/>
        <end position="502"/>
    </location>
</feature>
<feature type="region of interest" description="Type E(+) motif">
    <location>
        <begin position="503"/>
        <end position="533"/>
    </location>
</feature>
<feature type="region of interest" description="Type DYW motif">
    <location>
        <begin position="534"/>
        <end position="628"/>
    </location>
</feature>
<accession>Q9LIC3</accession>
<evidence type="ECO:0000255" key="1"/>
<evidence type="ECO:0000305" key="2"/>
<name>PP227_ARATH</name>
<comment type="subcellular location">
    <subcellularLocation>
        <location evidence="2">Mitochondrion</location>
    </subcellularLocation>
</comment>
<comment type="similarity">
    <text evidence="2">Belongs to the PPR family. PCMP-H subfamily.</text>
</comment>
<comment type="online information" name="Pentatricopeptide repeat proteins">
    <link uri="https://ppr.plantenergy.uwa.edu.au"/>
</comment>
<protein>
    <recommendedName>
        <fullName>Putative pentatricopeptide repeat-containing protein At3g13770, mitochondrial</fullName>
    </recommendedName>
</protein>
<sequence length="628" mass="70736">MFNLMRLIHRSFSSSPTNYVLQTILPISQLCSNGRLQEALLEMAMLGPEMGFHGYDALLNACLDKRALRDGQRVHAHMIKTRYLPATYLRTRLLIFYGKCDCLEDARKVLDEMPEKNVVSWTAMISRYSQTGHSSEALTVFAEMMRSDGKPNEFTFATVLTSCIRASGLGLGKQIHGLIVKWNYDSHIFVGSSLLDMYAKAGQIKEAREIFECLPERDVVSCTAIIAGYAQLGLDEEALEMFHRLHSEGMSPNYVTYASLLTALSGLALLDHGKQAHCHVLRRELPFYAVLQNSLIDMYSKCGNLSYARRLFDNMPERTAISWNAMLVGYSKHGLGREVLELFRLMRDEKRVKPDAVTLLAVLSGCSHGRMEDTGLNIFDGMVAGEYGTKPGTEHYGCIVDMLGRAGRIDEAFEFIKRMPSKPTAGVLGSLLGACRVHLSVDIGESVGRRLIEIEPENAGNYVILSNLYASAGRWADVNNVRAMMMQKAVTKEPGRSWIQHEQTLHYFHANDRTHPRREEVLAKMKEISIKMKQAGYVPDLSCVLYDVDEEQKEKMLLGHSEKLALTFGLIATGEGIPIRVFKNLRICVDCHNFAKIFSKVFEREVSLRDKNRFHQIVDGICSCGDYW</sequence>
<gene>
    <name type="primary">PCMP-H85</name>
    <name type="ordered locus">At3g13770</name>
    <name type="ORF">MMM17.3</name>
</gene>
<dbReference type="EMBL" id="AP001307">
    <property type="protein sequence ID" value="BAB01925.1"/>
    <property type="molecule type" value="Genomic_DNA"/>
</dbReference>
<dbReference type="EMBL" id="CP002686">
    <property type="protein sequence ID" value="AEE75409.1"/>
    <property type="molecule type" value="Genomic_DNA"/>
</dbReference>
<dbReference type="RefSeq" id="NP_187990.1">
    <property type="nucleotide sequence ID" value="NM_112227.1"/>
</dbReference>
<dbReference type="SMR" id="Q9LIC3"/>
<dbReference type="BioGRID" id="5920">
    <property type="interactions" value="1"/>
</dbReference>
<dbReference type="STRING" id="3702.Q9LIC3"/>
<dbReference type="iPTMnet" id="Q9LIC3"/>
<dbReference type="PaxDb" id="3702-AT3G13770.1"/>
<dbReference type="ProteomicsDB" id="249175"/>
<dbReference type="EnsemblPlants" id="AT3G13770.1">
    <property type="protein sequence ID" value="AT3G13770.1"/>
    <property type="gene ID" value="AT3G13770"/>
</dbReference>
<dbReference type="GeneID" id="820586"/>
<dbReference type="Gramene" id="AT3G13770.1">
    <property type="protein sequence ID" value="AT3G13770.1"/>
    <property type="gene ID" value="AT3G13770"/>
</dbReference>
<dbReference type="KEGG" id="ath:AT3G13770"/>
<dbReference type="Araport" id="AT3G13770"/>
<dbReference type="TAIR" id="AT3G13770"/>
<dbReference type="eggNOG" id="KOG4197">
    <property type="taxonomic scope" value="Eukaryota"/>
</dbReference>
<dbReference type="HOGENOM" id="CLU_002706_15_1_1"/>
<dbReference type="InParanoid" id="Q9LIC3"/>
<dbReference type="OMA" id="TCYLPPV"/>
<dbReference type="PhylomeDB" id="Q9LIC3"/>
<dbReference type="PRO" id="PR:Q9LIC3"/>
<dbReference type="Proteomes" id="UP000006548">
    <property type="component" value="Chromosome 3"/>
</dbReference>
<dbReference type="ExpressionAtlas" id="Q9LIC3">
    <property type="expression patterns" value="baseline and differential"/>
</dbReference>
<dbReference type="GO" id="GO:0005739">
    <property type="term" value="C:mitochondrion"/>
    <property type="evidence" value="ECO:0007669"/>
    <property type="project" value="UniProtKB-SubCell"/>
</dbReference>
<dbReference type="GO" id="GO:0003723">
    <property type="term" value="F:RNA binding"/>
    <property type="evidence" value="ECO:0007669"/>
    <property type="project" value="InterPro"/>
</dbReference>
<dbReference type="GO" id="GO:0008270">
    <property type="term" value="F:zinc ion binding"/>
    <property type="evidence" value="ECO:0007669"/>
    <property type="project" value="InterPro"/>
</dbReference>
<dbReference type="GO" id="GO:0009451">
    <property type="term" value="P:RNA modification"/>
    <property type="evidence" value="ECO:0007669"/>
    <property type="project" value="InterPro"/>
</dbReference>
<dbReference type="FunFam" id="1.25.40.10:FF:000366">
    <property type="entry name" value="Pentatricopeptide (PPR) repeat-containing protein"/>
    <property type="match status" value="1"/>
</dbReference>
<dbReference type="FunFam" id="1.25.40.10:FF:000144">
    <property type="entry name" value="Pentatricopeptide repeat-containing protein, mitochondrial"/>
    <property type="match status" value="1"/>
</dbReference>
<dbReference type="FunFam" id="1.25.40.10:FF:000488">
    <property type="entry name" value="Pentatricopeptide repeat-containing protein, mitochondrial"/>
    <property type="match status" value="1"/>
</dbReference>
<dbReference type="FunFam" id="1.25.40.10:FF:000501">
    <property type="entry name" value="Putative pentatricopeptide repeat-containing protein mitochondrial"/>
    <property type="match status" value="1"/>
</dbReference>
<dbReference type="Gene3D" id="1.25.40.10">
    <property type="entry name" value="Tetratricopeptide repeat domain"/>
    <property type="match status" value="3"/>
</dbReference>
<dbReference type="InterPro" id="IPR032867">
    <property type="entry name" value="DYW_dom"/>
</dbReference>
<dbReference type="InterPro" id="IPR046848">
    <property type="entry name" value="E_motif"/>
</dbReference>
<dbReference type="InterPro" id="IPR002885">
    <property type="entry name" value="Pentatricopeptide_rpt"/>
</dbReference>
<dbReference type="InterPro" id="IPR046960">
    <property type="entry name" value="PPR_At4g14850-like_plant"/>
</dbReference>
<dbReference type="InterPro" id="IPR011990">
    <property type="entry name" value="TPR-like_helical_dom_sf"/>
</dbReference>
<dbReference type="NCBIfam" id="TIGR00756">
    <property type="entry name" value="PPR"/>
    <property type="match status" value="4"/>
</dbReference>
<dbReference type="PANTHER" id="PTHR24015:SF1693">
    <property type="entry name" value="DYW DOMAIN-CONTAINING PROTEIN"/>
    <property type="match status" value="1"/>
</dbReference>
<dbReference type="PANTHER" id="PTHR24015">
    <property type="entry name" value="OS07G0578800 PROTEIN-RELATED"/>
    <property type="match status" value="1"/>
</dbReference>
<dbReference type="Pfam" id="PF14432">
    <property type="entry name" value="DYW_deaminase"/>
    <property type="match status" value="1"/>
</dbReference>
<dbReference type="Pfam" id="PF20431">
    <property type="entry name" value="E_motif"/>
    <property type="match status" value="1"/>
</dbReference>
<dbReference type="Pfam" id="PF01535">
    <property type="entry name" value="PPR"/>
    <property type="match status" value="2"/>
</dbReference>
<dbReference type="Pfam" id="PF13041">
    <property type="entry name" value="PPR_2"/>
    <property type="match status" value="3"/>
</dbReference>
<dbReference type="PROSITE" id="PS51375">
    <property type="entry name" value="PPR"/>
    <property type="match status" value="12"/>
</dbReference>